<feature type="chain" id="PRO_0000121743" description="Membrane-associated progesterone receptor component 2">
    <location>
        <begin position="1"/>
        <end position="223"/>
    </location>
</feature>
<feature type="transmembrane region" description="Helical" evidence="3">
    <location>
        <begin position="42"/>
        <end position="66"/>
    </location>
</feature>
<feature type="domain" description="Cytochrome b5 heme-binding">
    <location>
        <begin position="102"/>
        <end position="201"/>
    </location>
</feature>
<feature type="region of interest" description="Disordered" evidence="4">
    <location>
        <begin position="1"/>
        <end position="33"/>
    </location>
</feature>
<feature type="region of interest" description="Disordered" evidence="4">
    <location>
        <begin position="202"/>
        <end position="223"/>
    </location>
</feature>
<feature type="compositionally biased region" description="Low complexity" evidence="4">
    <location>
        <begin position="15"/>
        <end position="33"/>
    </location>
</feature>
<feature type="compositionally biased region" description="Acidic residues" evidence="4">
    <location>
        <begin position="206"/>
        <end position="215"/>
    </location>
</feature>
<feature type="modified residue" description="Phosphoserine" evidence="16 18 19 20 21 23 24">
    <location>
        <position position="90"/>
    </location>
</feature>
<feature type="modified residue" description="Phosphoserine" evidence="23">
    <location>
        <position position="104"/>
    </location>
</feature>
<feature type="modified residue" description="Phosphoserine" evidence="23 24">
    <location>
        <position position="208"/>
    </location>
</feature>
<feature type="modified residue" description="Phosphotyrosine" evidence="17">
    <location>
        <position position="210"/>
    </location>
</feature>
<feature type="modified residue" description="Phosphothreonine" evidence="17 21 22 23 24">
    <location>
        <position position="211"/>
    </location>
</feature>
<feature type="glycosylation site" description="O-linked (Xyl...) (chondroitin sulfate) serine" evidence="8">
    <location>
        <position position="15"/>
    </location>
</feature>
<feature type="splice variant" id="VSP_053500" description="In isoform 2." evidence="9">
    <original>M</original>
    <variation>MGGAGRGVGEGRGRGGGGRRWRAVM</variation>
    <location>
        <position position="1"/>
    </location>
</feature>
<name>PGRC2_HUMAN</name>
<reference key="1">
    <citation type="journal article" date="1998" name="Biol. Chem.">
        <title>Cloning and tissue expression of two putative steroid membrane receptors.</title>
        <authorList>
            <person name="Gerdes D."/>
            <person name="Wehling M."/>
            <person name="Leube B."/>
            <person name="Falkenstein E."/>
        </authorList>
    </citation>
    <scope>NUCLEOTIDE SEQUENCE [MRNA] (ISOFORM 1)</scope>
    <source>
        <tissue>Liver</tissue>
    </source>
</reference>
<reference key="2">
    <citation type="journal article" date="2004" name="Nat. Genet.">
        <title>Complete sequencing and characterization of 21,243 full-length human cDNAs.</title>
        <authorList>
            <person name="Ota T."/>
            <person name="Suzuki Y."/>
            <person name="Nishikawa T."/>
            <person name="Otsuki T."/>
            <person name="Sugiyama T."/>
            <person name="Irie R."/>
            <person name="Wakamatsu A."/>
            <person name="Hayashi K."/>
            <person name="Sato H."/>
            <person name="Nagai K."/>
            <person name="Kimura K."/>
            <person name="Makita H."/>
            <person name="Sekine M."/>
            <person name="Obayashi M."/>
            <person name="Nishi T."/>
            <person name="Shibahara T."/>
            <person name="Tanaka T."/>
            <person name="Ishii S."/>
            <person name="Yamamoto J."/>
            <person name="Saito K."/>
            <person name="Kawai Y."/>
            <person name="Isono Y."/>
            <person name="Nakamura Y."/>
            <person name="Nagahari K."/>
            <person name="Murakami K."/>
            <person name="Yasuda T."/>
            <person name="Iwayanagi T."/>
            <person name="Wagatsuma M."/>
            <person name="Shiratori A."/>
            <person name="Sudo H."/>
            <person name="Hosoiri T."/>
            <person name="Kaku Y."/>
            <person name="Kodaira H."/>
            <person name="Kondo H."/>
            <person name="Sugawara M."/>
            <person name="Takahashi M."/>
            <person name="Kanda K."/>
            <person name="Yokoi T."/>
            <person name="Furuya T."/>
            <person name="Kikkawa E."/>
            <person name="Omura Y."/>
            <person name="Abe K."/>
            <person name="Kamihara K."/>
            <person name="Katsuta N."/>
            <person name="Sato K."/>
            <person name="Tanikawa M."/>
            <person name="Yamazaki M."/>
            <person name="Ninomiya K."/>
            <person name="Ishibashi T."/>
            <person name="Yamashita H."/>
            <person name="Murakawa K."/>
            <person name="Fujimori K."/>
            <person name="Tanai H."/>
            <person name="Kimata M."/>
            <person name="Watanabe M."/>
            <person name="Hiraoka S."/>
            <person name="Chiba Y."/>
            <person name="Ishida S."/>
            <person name="Ono Y."/>
            <person name="Takiguchi S."/>
            <person name="Watanabe S."/>
            <person name="Yosida M."/>
            <person name="Hotuta T."/>
            <person name="Kusano J."/>
            <person name="Kanehori K."/>
            <person name="Takahashi-Fujii A."/>
            <person name="Hara H."/>
            <person name="Tanase T.-O."/>
            <person name="Nomura Y."/>
            <person name="Togiya S."/>
            <person name="Komai F."/>
            <person name="Hara R."/>
            <person name="Takeuchi K."/>
            <person name="Arita M."/>
            <person name="Imose N."/>
            <person name="Musashino K."/>
            <person name="Yuuki H."/>
            <person name="Oshima A."/>
            <person name="Sasaki N."/>
            <person name="Aotsuka S."/>
            <person name="Yoshikawa Y."/>
            <person name="Matsunawa H."/>
            <person name="Ichihara T."/>
            <person name="Shiohata N."/>
            <person name="Sano S."/>
            <person name="Moriya S."/>
            <person name="Momiyama H."/>
            <person name="Satoh N."/>
            <person name="Takami S."/>
            <person name="Terashima Y."/>
            <person name="Suzuki O."/>
            <person name="Nakagawa S."/>
            <person name="Senoh A."/>
            <person name="Mizoguchi H."/>
            <person name="Goto Y."/>
            <person name="Shimizu F."/>
            <person name="Wakebe H."/>
            <person name="Hishigaki H."/>
            <person name="Watanabe T."/>
            <person name="Sugiyama A."/>
            <person name="Takemoto M."/>
            <person name="Kawakami B."/>
            <person name="Yamazaki M."/>
            <person name="Watanabe K."/>
            <person name="Kumagai A."/>
            <person name="Itakura S."/>
            <person name="Fukuzumi Y."/>
            <person name="Fujimori Y."/>
            <person name="Komiyama M."/>
            <person name="Tashiro H."/>
            <person name="Tanigami A."/>
            <person name="Fujiwara T."/>
            <person name="Ono T."/>
            <person name="Yamada K."/>
            <person name="Fujii Y."/>
            <person name="Ozaki K."/>
            <person name="Hirao M."/>
            <person name="Ohmori Y."/>
            <person name="Kawabata A."/>
            <person name="Hikiji T."/>
            <person name="Kobatake N."/>
            <person name="Inagaki H."/>
            <person name="Ikema Y."/>
            <person name="Okamoto S."/>
            <person name="Okitani R."/>
            <person name="Kawakami T."/>
            <person name="Noguchi S."/>
            <person name="Itoh T."/>
            <person name="Shigeta K."/>
            <person name="Senba T."/>
            <person name="Matsumura K."/>
            <person name="Nakajima Y."/>
            <person name="Mizuno T."/>
            <person name="Morinaga M."/>
            <person name="Sasaki M."/>
            <person name="Togashi T."/>
            <person name="Oyama M."/>
            <person name="Hata H."/>
            <person name="Watanabe M."/>
            <person name="Komatsu T."/>
            <person name="Mizushima-Sugano J."/>
            <person name="Satoh T."/>
            <person name="Shirai Y."/>
            <person name="Takahashi Y."/>
            <person name="Nakagawa K."/>
            <person name="Okumura K."/>
            <person name="Nagase T."/>
            <person name="Nomura N."/>
            <person name="Kikuchi H."/>
            <person name="Masuho Y."/>
            <person name="Yamashita R."/>
            <person name="Nakai K."/>
            <person name="Yada T."/>
            <person name="Nakamura Y."/>
            <person name="Ohara O."/>
            <person name="Isogai T."/>
            <person name="Sugano S."/>
        </authorList>
    </citation>
    <scope>NUCLEOTIDE SEQUENCE [LARGE SCALE MRNA] (ISOFORM 2)</scope>
    <source>
        <tissue>Tongue</tissue>
    </source>
</reference>
<reference key="3">
    <citation type="submission" date="2006-04" db="EMBL/GenBank/DDBJ databases">
        <authorList>
            <consortium name="NIEHS SNPs program"/>
        </authorList>
    </citation>
    <scope>NUCLEOTIDE SEQUENCE [GENOMIC DNA]</scope>
</reference>
<reference key="4">
    <citation type="journal article" date="2004" name="Genome Res.">
        <title>The status, quality, and expansion of the NIH full-length cDNA project: the Mammalian Gene Collection (MGC).</title>
        <authorList>
            <consortium name="The MGC Project Team"/>
        </authorList>
    </citation>
    <scope>NUCLEOTIDE SEQUENCE [LARGE SCALE MRNA] (ISOFORM 1)</scope>
    <source>
        <tissue>Kidney</tissue>
        <tissue>Testis</tissue>
    </source>
</reference>
<reference key="5">
    <citation type="journal article" date="2006" name="Cell">
        <title>Global, in vivo, and site-specific phosphorylation dynamics in signaling networks.</title>
        <authorList>
            <person name="Olsen J.V."/>
            <person name="Blagoev B."/>
            <person name="Gnad F."/>
            <person name="Macek B."/>
            <person name="Kumar C."/>
            <person name="Mortensen P."/>
            <person name="Mann M."/>
        </authorList>
    </citation>
    <scope>PHOSPHORYLATION [LARGE SCALE ANALYSIS] AT SER-90</scope>
    <scope>IDENTIFICATION BY MASS SPECTROMETRY [LARGE SCALE ANALYSIS]</scope>
    <source>
        <tissue>Cervix carcinoma</tissue>
    </source>
</reference>
<reference key="6">
    <citation type="journal article" date="2008" name="Mol. Cell">
        <title>Kinase-selective enrichment enables quantitative phosphoproteomics of the kinome across the cell cycle.</title>
        <authorList>
            <person name="Daub H."/>
            <person name="Olsen J.V."/>
            <person name="Bairlein M."/>
            <person name="Gnad F."/>
            <person name="Oppermann F.S."/>
            <person name="Korner R."/>
            <person name="Greff Z."/>
            <person name="Keri G."/>
            <person name="Stemmann O."/>
            <person name="Mann M."/>
        </authorList>
    </citation>
    <scope>PHOSPHORYLATION [LARGE SCALE ANALYSIS] AT SER-90</scope>
    <scope>IDENTIFICATION BY MASS SPECTROMETRY [LARGE SCALE ANALYSIS]</scope>
    <source>
        <tissue>Cervix carcinoma</tissue>
    </source>
</reference>
<reference key="7">
    <citation type="journal article" date="2008" name="Proc. Natl. Acad. Sci. U.S.A.">
        <title>A quantitative atlas of mitotic phosphorylation.</title>
        <authorList>
            <person name="Dephoure N."/>
            <person name="Zhou C."/>
            <person name="Villen J."/>
            <person name="Beausoleil S.A."/>
            <person name="Bakalarski C.E."/>
            <person name="Elledge S.J."/>
            <person name="Gygi S.P."/>
        </authorList>
    </citation>
    <scope>PHOSPHORYLATION [LARGE SCALE ANALYSIS] AT TYR-210 AND THR-211</scope>
    <scope>IDENTIFICATION BY MASS SPECTROMETRY [LARGE SCALE ANALYSIS]</scope>
    <source>
        <tissue>Cervix carcinoma</tissue>
    </source>
</reference>
<reference key="8">
    <citation type="journal article" date="2008" name="Proteomics">
        <title>Large-scale phosphoproteome analysis of human liver tissue by enrichment and fractionation of phosphopeptides with strong anion exchange chromatography.</title>
        <authorList>
            <person name="Han G."/>
            <person name="Ye M."/>
            <person name="Zhou H."/>
            <person name="Jiang X."/>
            <person name="Feng S."/>
            <person name="Jiang X."/>
            <person name="Tian R."/>
            <person name="Wan D."/>
            <person name="Zou H."/>
            <person name="Gu J."/>
        </authorList>
    </citation>
    <scope>IDENTIFICATION BY MASS SPECTROMETRY [LARGE SCALE ANALYSIS]</scope>
    <source>
        <tissue>Liver</tissue>
    </source>
</reference>
<reference key="9">
    <citation type="journal article" date="2009" name="Anal. Chem.">
        <title>Lys-N and trypsin cover complementary parts of the phosphoproteome in a refined SCX-based approach.</title>
        <authorList>
            <person name="Gauci S."/>
            <person name="Helbig A.O."/>
            <person name="Slijper M."/>
            <person name="Krijgsveld J."/>
            <person name="Heck A.J."/>
            <person name="Mohammed S."/>
        </authorList>
    </citation>
    <scope>IDENTIFICATION BY MASS SPECTROMETRY [LARGE SCALE ANALYSIS]</scope>
</reference>
<reference key="10">
    <citation type="journal article" date="2009" name="Mol. Cell. Proteomics">
        <title>Large-scale proteomics analysis of the human kinome.</title>
        <authorList>
            <person name="Oppermann F.S."/>
            <person name="Gnad F."/>
            <person name="Olsen J.V."/>
            <person name="Hornberger R."/>
            <person name="Greff Z."/>
            <person name="Keri G."/>
            <person name="Mann M."/>
            <person name="Daub H."/>
        </authorList>
    </citation>
    <scope>PHOSPHORYLATION [LARGE SCALE ANALYSIS] AT SER-90</scope>
    <scope>IDENTIFICATION BY MASS SPECTROMETRY [LARGE SCALE ANALYSIS]</scope>
</reference>
<reference key="11">
    <citation type="journal article" date="2009" name="Sci. Signal.">
        <title>Quantitative phosphoproteomic analysis of T cell receptor signaling reveals system-wide modulation of protein-protein interactions.</title>
        <authorList>
            <person name="Mayya V."/>
            <person name="Lundgren D.H."/>
            <person name="Hwang S.-I."/>
            <person name="Rezaul K."/>
            <person name="Wu L."/>
            <person name="Eng J.K."/>
            <person name="Rodionov V."/>
            <person name="Han D.K."/>
        </authorList>
    </citation>
    <scope>PHOSPHORYLATION [LARGE SCALE ANALYSIS] AT SER-90</scope>
    <scope>IDENTIFICATION BY MASS SPECTROMETRY [LARGE SCALE ANALYSIS]</scope>
    <source>
        <tissue>Leukemic T-cell</tissue>
    </source>
</reference>
<reference key="12">
    <citation type="journal article" date="2010" name="Sci. Signal.">
        <title>Quantitative phosphoproteomics reveals widespread full phosphorylation site occupancy during mitosis.</title>
        <authorList>
            <person name="Olsen J.V."/>
            <person name="Vermeulen M."/>
            <person name="Santamaria A."/>
            <person name="Kumar C."/>
            <person name="Miller M.L."/>
            <person name="Jensen L.J."/>
            <person name="Gnad F."/>
            <person name="Cox J."/>
            <person name="Jensen T.S."/>
            <person name="Nigg E.A."/>
            <person name="Brunak S."/>
            <person name="Mann M."/>
        </authorList>
    </citation>
    <scope>PHOSPHORYLATION [LARGE SCALE ANALYSIS] AT SER-90 AND THR-211</scope>
    <scope>IDENTIFICATION BY MASS SPECTROMETRY [LARGE SCALE ANALYSIS]</scope>
    <source>
        <tissue>Cervix carcinoma</tissue>
    </source>
</reference>
<reference key="13">
    <citation type="journal article" date="2011" name="BMC Syst. Biol.">
        <title>Initial characterization of the human central proteome.</title>
        <authorList>
            <person name="Burkard T.R."/>
            <person name="Planyavsky M."/>
            <person name="Kaupe I."/>
            <person name="Breitwieser F.P."/>
            <person name="Buerckstuemmer T."/>
            <person name="Bennett K.L."/>
            <person name="Superti-Furga G."/>
            <person name="Colinge J."/>
        </authorList>
    </citation>
    <scope>IDENTIFICATION BY MASS SPECTROMETRY [LARGE SCALE ANALYSIS]</scope>
</reference>
<reference key="14">
    <citation type="journal article" date="2011" name="Sci. Signal.">
        <title>System-wide temporal characterization of the proteome and phosphoproteome of human embryonic stem cell differentiation.</title>
        <authorList>
            <person name="Rigbolt K.T."/>
            <person name="Prokhorova T.A."/>
            <person name="Akimov V."/>
            <person name="Henningsen J."/>
            <person name="Johansen P.T."/>
            <person name="Kratchmarova I."/>
            <person name="Kassem M."/>
            <person name="Mann M."/>
            <person name="Olsen J.V."/>
            <person name="Blagoev B."/>
        </authorList>
    </citation>
    <scope>PHOSPHORYLATION [LARGE SCALE ANALYSIS] AT THR-211</scope>
    <scope>IDENTIFICATION BY MASS SPECTROMETRY [LARGE SCALE ANALYSIS]</scope>
</reference>
<reference key="15">
    <citation type="journal article" date="2013" name="J. Proteome Res.">
        <title>Toward a comprehensive characterization of a human cancer cell phosphoproteome.</title>
        <authorList>
            <person name="Zhou H."/>
            <person name="Di Palma S."/>
            <person name="Preisinger C."/>
            <person name="Peng M."/>
            <person name="Polat A.N."/>
            <person name="Heck A.J."/>
            <person name="Mohammed S."/>
        </authorList>
    </citation>
    <scope>PHOSPHORYLATION [LARGE SCALE ANALYSIS] AT SER-90; SER-104; SER-208 AND THR-211</scope>
    <scope>IDENTIFICATION BY MASS SPECTROMETRY [LARGE SCALE ANALYSIS]</scope>
    <source>
        <tissue>Cervix carcinoma</tissue>
        <tissue>Erythroleukemia</tissue>
    </source>
</reference>
<reference key="16">
    <citation type="journal article" date="2014" name="J. Proteomics">
        <title>An enzyme assisted RP-RPLC approach for in-depth analysis of human liver phosphoproteome.</title>
        <authorList>
            <person name="Bian Y."/>
            <person name="Song C."/>
            <person name="Cheng K."/>
            <person name="Dong M."/>
            <person name="Wang F."/>
            <person name="Huang J."/>
            <person name="Sun D."/>
            <person name="Wang L."/>
            <person name="Ye M."/>
            <person name="Zou H."/>
        </authorList>
    </citation>
    <scope>PHOSPHORYLATION [LARGE SCALE ANALYSIS] AT SER-90; SER-208 AND THR-211</scope>
    <scope>IDENTIFICATION BY MASS SPECTROMETRY [LARGE SCALE ANALYSIS]</scope>
    <source>
        <tissue>Liver</tissue>
    </source>
</reference>
<reference key="17">
    <citation type="journal article" date="2014" name="Reprod. Sci.">
        <title>Expression patterns of progesterone receptor membrane components 1 and 2 in endometria from women with and without endometriosis.</title>
        <authorList>
            <person name="Bunch K."/>
            <person name="Tinnemore D."/>
            <person name="Huff S."/>
            <person name="Hoffer Z.S."/>
            <person name="Burney R.O."/>
            <person name="Stallings J.D."/>
        </authorList>
    </citation>
    <scope>TISSUE SPECIFICITY</scope>
    <scope>SUBCELLULAR LOCATION</scope>
</reference>
<reference key="18">
    <citation type="journal article" date="2015" name="Proteomics">
        <title>N-terminome analysis of the human mitochondrial proteome.</title>
        <authorList>
            <person name="Vaca Jacome A.S."/>
            <person name="Rabilloud T."/>
            <person name="Schaeffer-Reiss C."/>
            <person name="Rompais M."/>
            <person name="Ayoub D."/>
            <person name="Lane L."/>
            <person name="Bairoch A."/>
            <person name="Van Dorsselaer A."/>
            <person name="Carapito C."/>
        </authorList>
    </citation>
    <scope>IDENTIFICATION BY MASS SPECTROMETRY [LARGE SCALE ANALYSIS]</scope>
</reference>
<reference key="19">
    <citation type="journal article" date="2016" name="Biol. Open">
        <title>Identification of a novel putative interaction partner of the nucleoporin ALADIN.</title>
        <authorList>
            <person name="Juehlen R."/>
            <person name="Landgraf D."/>
            <person name="Huebner A."/>
            <person name="Koehler K."/>
        </authorList>
    </citation>
    <scope>INTERACTION WITH AAAS</scope>
    <scope>SUBCELLULAR LOCATION</scope>
</reference>
<reference key="20">
    <citation type="journal article" date="2017" name="Cell">
        <title>Ligand and Target Discovery by Fragment-Based Screening in Human Cells.</title>
        <authorList>
            <person name="Parker C.G."/>
            <person name="Galmozzi A."/>
            <person name="Wang Y."/>
            <person name="Correia B.E."/>
            <person name="Sasaki K."/>
            <person name="Joslyn C.M."/>
            <person name="Kim A.S."/>
            <person name="Cavallaro C.L."/>
            <person name="Lawrence R.M."/>
            <person name="Johnson S.R."/>
            <person name="Narvaiza I."/>
            <person name="Saez E."/>
            <person name="Cravatt B.F."/>
        </authorList>
    </citation>
    <scope>FUNCTION</scope>
    <scope>SUBCELLULAR LOCATION</scope>
    <scope>HEME-BINDING</scope>
</reference>
<reference key="21">
    <citation type="journal article" date="2017" name="Front. Pharmacol.">
        <title>Membrane associated progesterone receptors: promiscuous proteins with pleiotropic functions - focus on interactions with cytochromes P450.</title>
        <authorList>
            <person name="Ryu C.S."/>
            <person name="Klein K."/>
            <person name="Zanger U.M."/>
        </authorList>
    </citation>
    <scope>REVIEW</scope>
    <scope>FUNCTION</scope>
    <scope>MISCELLANEOUS</scope>
</reference>
<reference key="22">
    <citation type="journal article" date="2023" name="Mol. Cell. Proteomics">
        <title>Mapping the Human Chondroitin Sulfate Glycoproteome Reveals an Unexpected Correlation Between Glycan Sulfation and Attachment Site Characteristics.</title>
        <authorList>
            <person name="Noborn F."/>
            <person name="Nilsson J."/>
            <person name="Sihlbom C."/>
            <person name="Nikpour M."/>
            <person name="Kjellen L."/>
            <person name="Larson G."/>
        </authorList>
    </citation>
    <scope>SUBCELLULAR LOCATION</scope>
    <scope>TISSUE SPECIFICITY</scope>
    <scope>GLYCOSYLATION AT SER-15</scope>
</reference>
<accession>O15173</accession>
<accession>Q569H1</accession>
<organism>
    <name type="scientific">Homo sapiens</name>
    <name type="common">Human</name>
    <dbReference type="NCBI Taxonomy" id="9606"/>
    <lineage>
        <taxon>Eukaryota</taxon>
        <taxon>Metazoa</taxon>
        <taxon>Chordata</taxon>
        <taxon>Craniata</taxon>
        <taxon>Vertebrata</taxon>
        <taxon>Euteleostomi</taxon>
        <taxon>Mammalia</taxon>
        <taxon>Eutheria</taxon>
        <taxon>Euarchontoglires</taxon>
        <taxon>Primates</taxon>
        <taxon>Haplorrhini</taxon>
        <taxon>Catarrhini</taxon>
        <taxon>Hominidae</taxon>
        <taxon>Homo</taxon>
    </lineage>
</organism>
<dbReference type="EMBL" id="AJ002030">
    <property type="protein sequence ID" value="CAA05152.1"/>
    <property type="molecule type" value="mRNA"/>
</dbReference>
<dbReference type="EMBL" id="AK131272">
    <property type="status" value="NOT_ANNOTATED_CDS"/>
    <property type="molecule type" value="mRNA"/>
</dbReference>
<dbReference type="EMBL" id="DQ496105">
    <property type="protein sequence ID" value="ABF47094.1"/>
    <property type="molecule type" value="Genomic_DNA"/>
</dbReference>
<dbReference type="EMBL" id="BC016692">
    <property type="protein sequence ID" value="AAH16692.1"/>
    <property type="molecule type" value="mRNA"/>
</dbReference>
<dbReference type="EMBL" id="BC092478">
    <property type="protein sequence ID" value="AAH92478.1"/>
    <property type="molecule type" value="mRNA"/>
</dbReference>
<dbReference type="CCDS" id="CCDS3739.3">
    <molecule id="O15173-1"/>
</dbReference>
<dbReference type="RefSeq" id="NP_006311.3">
    <molecule id="O15173-1"/>
    <property type="nucleotide sequence ID" value="NM_006320.6"/>
</dbReference>
<dbReference type="SMR" id="O15173"/>
<dbReference type="BioGRID" id="115693">
    <property type="interactions" value="318"/>
</dbReference>
<dbReference type="FunCoup" id="O15173">
    <property type="interactions" value="3156"/>
</dbReference>
<dbReference type="IntAct" id="O15173">
    <property type="interactions" value="198"/>
</dbReference>
<dbReference type="MINT" id="O15173"/>
<dbReference type="STRING" id="9606.ENSP00000481886"/>
<dbReference type="TCDB" id="9.B.433.1.1">
    <property type="family name" value="the progesterone receptor membrane-associated component 2 (pgrmc2) family"/>
</dbReference>
<dbReference type="GlyGen" id="O15173">
    <property type="glycosylation" value="2 sites, 1 O-linked glycan (1 site)"/>
</dbReference>
<dbReference type="iPTMnet" id="O15173"/>
<dbReference type="MetOSite" id="O15173"/>
<dbReference type="PhosphoSitePlus" id="O15173"/>
<dbReference type="SwissPalm" id="O15173"/>
<dbReference type="BioMuta" id="PGRMC2"/>
<dbReference type="jPOST" id="O15173"/>
<dbReference type="MassIVE" id="O15173"/>
<dbReference type="PaxDb" id="9606-ENSP00000429301"/>
<dbReference type="PeptideAtlas" id="O15173"/>
<dbReference type="ProteomicsDB" id="48495">
    <molecule id="O15173-1"/>
</dbReference>
<dbReference type="Pumba" id="O15173"/>
<dbReference type="TopDownProteomics" id="O15173-1">
    <molecule id="O15173-1"/>
</dbReference>
<dbReference type="Antibodypedia" id="27009">
    <property type="antibodies" value="277 antibodies from 32 providers"/>
</dbReference>
<dbReference type="DNASU" id="10424"/>
<dbReference type="Ensembl" id="ENST00000296425.10">
    <molecule id="O15173-1"/>
    <property type="protein sequence ID" value="ENSP00000296425.4"/>
    <property type="gene ID" value="ENSG00000164040.18"/>
</dbReference>
<dbReference type="Ensembl" id="ENST00000520121.6">
    <molecule id="O15173-1"/>
    <property type="protein sequence ID" value="ENSP00000429301.2"/>
    <property type="gene ID" value="ENSG00000164040.18"/>
</dbReference>
<dbReference type="Ensembl" id="ENST00000613358.4">
    <molecule id="O15173-2"/>
    <property type="protein sequence ID" value="ENSP00000481886.1"/>
    <property type="gene ID" value="ENSG00000164040.18"/>
</dbReference>
<dbReference type="GeneID" id="10424"/>
<dbReference type="KEGG" id="hsa:10424"/>
<dbReference type="MANE-Select" id="ENST00000296425.10">
    <property type="protein sequence ID" value="ENSP00000296425.4"/>
    <property type="RefSeq nucleotide sequence ID" value="NM_006320.6"/>
    <property type="RefSeq protein sequence ID" value="NP_006311.3"/>
</dbReference>
<dbReference type="UCSC" id="uc003igg.4">
    <molecule id="O15173-1"/>
    <property type="organism name" value="human"/>
</dbReference>
<dbReference type="AGR" id="HGNC:16089"/>
<dbReference type="CTD" id="10424"/>
<dbReference type="DisGeNET" id="10424"/>
<dbReference type="GeneCards" id="PGRMC2"/>
<dbReference type="HGNC" id="HGNC:16089">
    <property type="gene designation" value="PGRMC2"/>
</dbReference>
<dbReference type="HPA" id="ENSG00000164040">
    <property type="expression patterns" value="Low tissue specificity"/>
</dbReference>
<dbReference type="MIM" id="607735">
    <property type="type" value="gene"/>
</dbReference>
<dbReference type="neXtProt" id="NX_O15173"/>
<dbReference type="OpenTargets" id="ENSG00000164040"/>
<dbReference type="VEuPathDB" id="HostDB:ENSG00000164040"/>
<dbReference type="eggNOG" id="KOG1110">
    <property type="taxonomic scope" value="Eukaryota"/>
</dbReference>
<dbReference type="GeneTree" id="ENSGT00940000159744"/>
<dbReference type="HOGENOM" id="CLU_042860_1_0_1"/>
<dbReference type="InParanoid" id="O15173"/>
<dbReference type="OrthoDB" id="547796at2759"/>
<dbReference type="PAN-GO" id="O15173">
    <property type="GO annotations" value="2 GO annotations based on evolutionary models"/>
</dbReference>
<dbReference type="PhylomeDB" id="O15173"/>
<dbReference type="PathwayCommons" id="O15173"/>
<dbReference type="Reactome" id="R-HSA-8980692">
    <property type="pathway name" value="RHOA GTPase cycle"/>
</dbReference>
<dbReference type="Reactome" id="R-HSA-9013404">
    <property type="pathway name" value="RAC2 GTPase cycle"/>
</dbReference>
<dbReference type="Reactome" id="R-HSA-9013405">
    <property type="pathway name" value="RHOD GTPase cycle"/>
</dbReference>
<dbReference type="Reactome" id="R-HSA-9013408">
    <property type="pathway name" value="RHOG GTPase cycle"/>
</dbReference>
<dbReference type="Reactome" id="R-HSA-9013423">
    <property type="pathway name" value="RAC3 GTPase cycle"/>
</dbReference>
<dbReference type="Reactome" id="R-HSA-9707616">
    <property type="pathway name" value="Heme signaling"/>
</dbReference>
<dbReference type="SignaLink" id="O15173"/>
<dbReference type="BioGRID-ORCS" id="10424">
    <property type="hits" value="37 hits in 1150 CRISPR screens"/>
</dbReference>
<dbReference type="CD-CODE" id="91857CE7">
    <property type="entry name" value="Nucleolus"/>
</dbReference>
<dbReference type="ChiTaRS" id="PGRMC2">
    <property type="organism name" value="human"/>
</dbReference>
<dbReference type="GenomeRNAi" id="10424"/>
<dbReference type="Pharos" id="O15173">
    <property type="development level" value="Tbio"/>
</dbReference>
<dbReference type="PRO" id="PR:O15173"/>
<dbReference type="Proteomes" id="UP000005640">
    <property type="component" value="Chromosome 4"/>
</dbReference>
<dbReference type="RNAct" id="O15173">
    <property type="molecule type" value="protein"/>
</dbReference>
<dbReference type="Bgee" id="ENSG00000164040">
    <property type="expression patterns" value="Expressed in jejunal mucosa and 210 other cell types or tissues"/>
</dbReference>
<dbReference type="ExpressionAtlas" id="O15173">
    <property type="expression patterns" value="baseline and differential"/>
</dbReference>
<dbReference type="GO" id="GO:0012505">
    <property type="term" value="C:endomembrane system"/>
    <property type="evidence" value="ECO:0000318"/>
    <property type="project" value="GO_Central"/>
</dbReference>
<dbReference type="GO" id="GO:0005783">
    <property type="term" value="C:endoplasmic reticulum"/>
    <property type="evidence" value="ECO:0000314"/>
    <property type="project" value="UniProtKB"/>
</dbReference>
<dbReference type="GO" id="GO:0005576">
    <property type="term" value="C:extracellular region"/>
    <property type="evidence" value="ECO:0007669"/>
    <property type="project" value="UniProtKB-SubCell"/>
</dbReference>
<dbReference type="GO" id="GO:0098978">
    <property type="term" value="C:glutamatergic synapse"/>
    <property type="evidence" value="ECO:0007669"/>
    <property type="project" value="Ensembl"/>
</dbReference>
<dbReference type="GO" id="GO:0016020">
    <property type="term" value="C:membrane"/>
    <property type="evidence" value="ECO:0007005"/>
    <property type="project" value="UniProtKB"/>
</dbReference>
<dbReference type="GO" id="GO:0005635">
    <property type="term" value="C:nuclear envelope"/>
    <property type="evidence" value="ECO:0000314"/>
    <property type="project" value="UniProtKB"/>
</dbReference>
<dbReference type="GO" id="GO:0005654">
    <property type="term" value="C:nucleoplasm"/>
    <property type="evidence" value="ECO:0000304"/>
    <property type="project" value="Reactome"/>
</dbReference>
<dbReference type="GO" id="GO:0020037">
    <property type="term" value="F:heme binding"/>
    <property type="evidence" value="ECO:0000314"/>
    <property type="project" value="UniProtKB"/>
</dbReference>
<dbReference type="GO" id="GO:0015232">
    <property type="term" value="F:heme transmembrane transporter activity"/>
    <property type="evidence" value="ECO:0007669"/>
    <property type="project" value="Ensembl"/>
</dbReference>
<dbReference type="GO" id="GO:0003707">
    <property type="term" value="F:nuclear steroid receptor activity"/>
    <property type="evidence" value="ECO:0000304"/>
    <property type="project" value="ProtInc"/>
</dbReference>
<dbReference type="GO" id="GO:0005496">
    <property type="term" value="F:steroid binding"/>
    <property type="evidence" value="ECO:0000304"/>
    <property type="project" value="ProtInc"/>
</dbReference>
<dbReference type="GO" id="GO:0060612">
    <property type="term" value="P:adipose tissue development"/>
    <property type="evidence" value="ECO:0000315"/>
    <property type="project" value="UniProtKB"/>
</dbReference>
<dbReference type="FunFam" id="3.10.120.10:FF:000003">
    <property type="entry name" value="membrane-associated progesterone receptor component 1"/>
    <property type="match status" value="1"/>
</dbReference>
<dbReference type="Gene3D" id="3.10.120.10">
    <property type="entry name" value="Cytochrome b5-like heme/steroid binding domain"/>
    <property type="match status" value="1"/>
</dbReference>
<dbReference type="InterPro" id="IPR001199">
    <property type="entry name" value="Cyt_B5-like_heme/steroid-bd"/>
</dbReference>
<dbReference type="InterPro" id="IPR036400">
    <property type="entry name" value="Cyt_B5-like_heme/steroid_sf"/>
</dbReference>
<dbReference type="InterPro" id="IPR050577">
    <property type="entry name" value="MAPR/NEUFC/NENF-like"/>
</dbReference>
<dbReference type="PANTHER" id="PTHR10281:SF24">
    <property type="entry name" value="MEMBRANE-ASSOCIATED PROGESTERONE RECEPTOR COMPONENT 2"/>
    <property type="match status" value="1"/>
</dbReference>
<dbReference type="PANTHER" id="PTHR10281">
    <property type="entry name" value="MEMBRANE-ASSOCIATED PROGESTERONE RECEPTOR COMPONENT-RELATED"/>
    <property type="match status" value="1"/>
</dbReference>
<dbReference type="Pfam" id="PF00173">
    <property type="entry name" value="Cyt-b5"/>
    <property type="match status" value="1"/>
</dbReference>
<dbReference type="SMART" id="SM01117">
    <property type="entry name" value="Cyt-b5"/>
    <property type="match status" value="1"/>
</dbReference>
<dbReference type="SUPFAM" id="SSF55856">
    <property type="entry name" value="Cytochrome b5-like heme/steroid binding domain"/>
    <property type="match status" value="1"/>
</dbReference>
<sequence>MAAGDGDVKLGTLGSGSESSNDGGSESPGDAGAAAEGGGWAAAALALLTGGGEMLLNVALVALVLLGAYRLWVRWGRRGLGAGAGAGEESPATSLPRMKKRDFSLEQLRQYDGSRNPRILLAVNGKVFDVTKGSKFYGPAGPYGIFAGRDASRGLATFCLDKDALRDEYDDLSDLNAVQMESVREWEMQFKEKYDYVGRLLKPGEEPSEYTDEEDTKDHNKQD</sequence>
<comment type="function">
    <text evidence="2 7 14">Required for the maintenance of uterine histoarchitecture and normal female reproductive lifespan (By similarity). May serve as a universal non-classical progesterone receptor in the uterus (Probable). Intracellular heme chaperone required for delivery of labile, or signaling heme, to the nucleus (By similarity). Plays a role in adipocyte function and systemic glucose homeostasis (PubMed:28111073). In brown fat, which has a high demand for heme, delivery of labile heme in the nucleus regulates the activity of heme-responsive transcriptional repressors such as NR1D1 and BACH1 (By similarity).</text>
</comment>
<comment type="subunit">
    <text evidence="2 6">Interacts with PGRMC1 (By similarity). Interacts with AAAS (PubMed:27754849).</text>
</comment>
<comment type="interaction">
    <interactant intactId="EBI-1050125">
        <id>O15173</id>
    </interactant>
    <interactant intactId="EBI-12820279">
        <id>Q96PS8</id>
        <label>AQP10</label>
    </interactant>
    <organismsDiffer>false</organismsDiffer>
    <experiments>3</experiments>
</comment>
<comment type="interaction">
    <interactant intactId="EBI-1050125">
        <id>O15173</id>
    </interactant>
    <interactant intactId="EBI-50185646">
        <id>Q96L15</id>
        <label>ART5</label>
    </interactant>
    <organismsDiffer>false</organismsDiffer>
    <experiments>3</experiments>
</comment>
<comment type="interaction">
    <interactant intactId="EBI-1050125">
        <id>O15173</id>
    </interactant>
    <interactant intactId="EBI-2949658">
        <id>O95429</id>
        <label>BAG4</label>
    </interactant>
    <organismsDiffer>false</organismsDiffer>
    <experiments>5</experiments>
</comment>
<comment type="interaction">
    <interactant intactId="EBI-1050125">
        <id>O15173</id>
    </interactant>
    <interactant intactId="EBI-8558308">
        <id>P01031</id>
        <label>C5</label>
    </interactant>
    <organismsDiffer>false</organismsDiffer>
    <experiments>3</experiments>
</comment>
<comment type="interaction">
    <interactant intactId="EBI-1050125">
        <id>O15173</id>
    </interactant>
    <interactant intactId="EBI-2834035">
        <id>Q5RI15</id>
        <label>COX20</label>
    </interactant>
    <organismsDiffer>false</organismsDiffer>
    <experiments>3</experiments>
</comment>
<comment type="interaction">
    <interactant intactId="EBI-1050125">
        <id>O15173</id>
    </interactant>
    <interactant intactId="EBI-717654">
        <id>O14569</id>
        <label>CYB561D2</label>
    </interactant>
    <organismsDiffer>false</organismsDiffer>
    <experiments>3</experiments>
</comment>
<comment type="interaction">
    <interactant intactId="EBI-1050125">
        <id>O15173</id>
    </interactant>
    <interactant intactId="EBI-1752413">
        <id>P78329</id>
        <label>CYP4F2</label>
    </interactant>
    <organismsDiffer>false</organismsDiffer>
    <experiments>3</experiments>
</comment>
<comment type="interaction">
    <interactant intactId="EBI-1050125">
        <id>O15173</id>
    </interactant>
    <interactant intactId="EBI-12831978">
        <id>Q6ZPD8</id>
        <label>DGAT2L6</label>
    </interactant>
    <organismsDiffer>false</organismsDiffer>
    <experiments>3</experiments>
</comment>
<comment type="interaction">
    <interactant intactId="EBI-1050125">
        <id>O15173</id>
    </interactant>
    <interactant intactId="EBI-3923585">
        <id>Q8N5I4</id>
        <label>DHRSX</label>
    </interactant>
    <organismsDiffer>false</organismsDiffer>
    <experiments>3</experiments>
</comment>
<comment type="interaction">
    <interactant intactId="EBI-1050125">
        <id>O15173</id>
    </interactant>
    <interactant intactId="EBI-2339413">
        <id>O14681</id>
        <label>EI24</label>
    </interactant>
    <organismsDiffer>false</organismsDiffer>
    <experiments>3</experiments>
</comment>
<comment type="interaction">
    <interactant intactId="EBI-1050125">
        <id>O15173</id>
    </interactant>
    <interactant intactId="EBI-11337888">
        <id>Q7L5A8</id>
        <label>FA2H</label>
    </interactant>
    <organismsDiffer>false</organismsDiffer>
    <experiments>3</experiments>
</comment>
<comment type="interaction">
    <interactant intactId="EBI-1050125">
        <id>O15173</id>
    </interactant>
    <interactant intactId="EBI-12142299">
        <id>Q96IV6</id>
        <label>FAXDC2</label>
    </interactant>
    <organismsDiffer>false</organismsDiffer>
    <experiments>3</experiments>
</comment>
<comment type="interaction">
    <interactant intactId="EBI-1050125">
        <id>O15173</id>
    </interactant>
    <interactant intactId="EBI-713304">
        <id>Q9H0Q3</id>
        <label>FXYD6</label>
    </interactant>
    <organismsDiffer>false</organismsDiffer>
    <experiments>3</experiments>
</comment>
<comment type="interaction">
    <interactant intactId="EBI-1050125">
        <id>O15173</id>
    </interactant>
    <interactant intactId="EBI-2515857">
        <id>O43681</id>
        <label>GET3</label>
    </interactant>
    <organismsDiffer>false</organismsDiffer>
    <experiments>3</experiments>
</comment>
<comment type="interaction">
    <interactant intactId="EBI-1050125">
        <id>O15173</id>
    </interactant>
    <interactant intactId="EBI-2868909">
        <id>Q9H3K2</id>
        <label>GHITM</label>
    </interactant>
    <organismsDiffer>false</organismsDiffer>
    <experiments>3</experiments>
</comment>
<comment type="interaction">
    <interactant intactId="EBI-1050125">
        <id>O15173</id>
    </interactant>
    <interactant intactId="EBI-11955647">
        <id>Q8TDV0</id>
        <label>GPR151</label>
    </interactant>
    <organismsDiffer>false</organismsDiffer>
    <experiments>3</experiments>
</comment>
<comment type="interaction">
    <interactant intactId="EBI-1050125">
        <id>O15173</id>
    </interactant>
    <interactant intactId="EBI-2568251">
        <id>P11215</id>
        <label>ITGAM</label>
    </interactant>
    <organismsDiffer>false</organismsDiffer>
    <experiments>3</experiments>
</comment>
<comment type="interaction">
    <interactant intactId="EBI-1050125">
        <id>O15173</id>
    </interactant>
    <interactant intactId="EBI-2556412">
        <id>Q8IWB1</id>
        <label>ITPRIP</label>
    </interactant>
    <organismsDiffer>false</organismsDiffer>
    <experiments>4</experiments>
</comment>
<comment type="interaction">
    <interactant intactId="EBI-1050125">
        <id>O15173</id>
    </interactant>
    <interactant intactId="EBI-12033434">
        <id>Q9UBY5</id>
        <label>LPAR3</label>
    </interactant>
    <organismsDiffer>false</organismsDiffer>
    <experiments>3</experiments>
</comment>
<comment type="interaction">
    <interactant intactId="EBI-1050125">
        <id>O15173</id>
    </interactant>
    <interactant intactId="EBI-750078">
        <id>Q13021</id>
        <label>MALL</label>
    </interactant>
    <organismsDiffer>false</organismsDiffer>
    <experiments>3</experiments>
</comment>
<comment type="interaction">
    <interactant intactId="EBI-1050125">
        <id>O15173</id>
    </interactant>
    <interactant intactId="EBI-2864441">
        <id>Q9Y4C4</id>
        <label>MFHAS1</label>
    </interactant>
    <organismsDiffer>false</organismsDiffer>
    <experiments>2</experiments>
</comment>
<comment type="interaction">
    <interactant intactId="EBI-1050125">
        <id>O15173</id>
    </interactant>
    <interactant intactId="EBI-3920969">
        <id>Q6N075</id>
        <label>MFSD5</label>
    </interactant>
    <organismsDiffer>false</organismsDiffer>
    <experiments>3</experiments>
</comment>
<comment type="interaction">
    <interactant intactId="EBI-1050125">
        <id>O15173</id>
    </interactant>
    <interactant intactId="EBI-1054848">
        <id>Q9P0S3</id>
        <label>ORMDL1</label>
    </interactant>
    <organismsDiffer>false</organismsDiffer>
    <experiments>3</experiments>
</comment>
<comment type="interaction">
    <interactant intactId="EBI-1050125">
        <id>O15173</id>
    </interactant>
    <interactant intactId="EBI-12213001">
        <id>I3L0A0</id>
        <label>PEDS1-UBE2V1</label>
    </interactant>
    <organismsDiffer>false</organismsDiffer>
    <experiments>3</experiments>
</comment>
<comment type="interaction">
    <interactant intactId="EBI-1050125">
        <id>O15173</id>
    </interactant>
    <interactant intactId="EBI-981985">
        <id>Q9Y5Y5</id>
        <label>PEX16</label>
    </interactant>
    <organismsDiffer>false</organismsDiffer>
    <experiments>3</experiments>
</comment>
<comment type="interaction">
    <interactant intactId="EBI-1050125">
        <id>O15173</id>
    </interactant>
    <interactant intactId="EBI-1045534">
        <id>O00264</id>
        <label>PGRMC1</label>
    </interactant>
    <organismsDiffer>false</organismsDiffer>
    <experiments>4</experiments>
</comment>
<comment type="interaction">
    <interactant intactId="EBI-1050125">
        <id>O15173</id>
    </interactant>
    <interactant intactId="EBI-3919291">
        <id>Q9Y342</id>
        <label>PLLP</label>
    </interactant>
    <organismsDiffer>false</organismsDiffer>
    <experiments>3</experiments>
</comment>
<comment type="interaction">
    <interactant intactId="EBI-1050125">
        <id>O15173</id>
    </interactant>
    <interactant intactId="EBI-2845982">
        <id>Q01453</id>
        <label>PMP22</label>
    </interactant>
    <organismsDiffer>false</organismsDiffer>
    <experiments>3</experiments>
</comment>
<comment type="interaction">
    <interactant intactId="EBI-1050125">
        <id>O15173</id>
    </interactant>
    <interactant intactId="EBI-373337">
        <id>O76064</id>
        <label>RNF8</label>
    </interactant>
    <organismsDiffer>false</organismsDiffer>
    <experiments>3</experiments>
</comment>
<comment type="interaction">
    <interactant intactId="EBI-1050125">
        <id>O15173</id>
    </interactant>
    <interactant intactId="EBI-8636004">
        <id>Q96GQ5</id>
        <label>RUSF1</label>
    </interactant>
    <organismsDiffer>false</organismsDiffer>
    <experiments>3</experiments>
</comment>
<comment type="interaction">
    <interactant intactId="EBI-1050125">
        <id>O15173</id>
    </interactant>
    <interactant intactId="EBI-355861">
        <id>Q9H9B4</id>
        <label>SFXN1</label>
    </interactant>
    <organismsDiffer>false</organismsDiffer>
    <experiments>3</experiments>
</comment>
<comment type="interaction">
    <interactant intactId="EBI-1050125">
        <id>O15173</id>
    </interactant>
    <interactant intactId="EBI-12243266">
        <id>Q7RTY0</id>
        <label>SLC16A13</label>
    </interactant>
    <organismsDiffer>false</organismsDiffer>
    <experiments>3</experiments>
</comment>
<comment type="interaction">
    <interactant intactId="EBI-1050125">
        <id>O15173</id>
    </interactant>
    <interactant intactId="EBI-10262251">
        <id>Q8IWU4</id>
        <label>SLC30A8</label>
    </interactant>
    <organismsDiffer>false</organismsDiffer>
    <experiments>3</experiments>
</comment>
<comment type="interaction">
    <interactant intactId="EBI-1050125">
        <id>O15173</id>
    </interactant>
    <interactant intactId="EBI-9978441">
        <id>Q9H2H9</id>
        <label>SLC38A1</label>
    </interactant>
    <organismsDiffer>false</organismsDiffer>
    <experiments>3</experiments>
</comment>
<comment type="interaction">
    <interactant intactId="EBI-1050125">
        <id>O15173</id>
    </interactant>
    <interactant intactId="EBI-10287091">
        <id>Q96H72</id>
        <label>SLC39A13</label>
    </interactant>
    <organismsDiffer>false</organismsDiffer>
    <experiments>3</experiments>
</comment>
<comment type="interaction">
    <interactant intactId="EBI-1050125">
        <id>O15173</id>
    </interactant>
    <interactant intactId="EBI-9916342">
        <id>Q86UD5</id>
        <label>SLC9B2</label>
    </interactant>
    <organismsDiffer>false</organismsDiffer>
    <experiments>3</experiments>
</comment>
<comment type="interaction">
    <interactant intactId="EBI-1050125">
        <id>O15173</id>
    </interactant>
    <interactant intactId="EBI-12828299">
        <id>O60906</id>
        <label>SMPD2</label>
    </interactant>
    <organismsDiffer>false</organismsDiffer>
    <experiments>3</experiments>
</comment>
<comment type="interaction">
    <interactant intactId="EBI-1050125">
        <id>O15173</id>
    </interactant>
    <interactant intactId="EBI-12908338">
        <id>Q96JF0-2</id>
        <label>ST6GAL2</label>
    </interactant>
    <organismsDiffer>false</organismsDiffer>
    <experiments>3</experiments>
</comment>
<comment type="interaction">
    <interactant intactId="EBI-1050125">
        <id>O15173</id>
    </interactant>
    <interactant intactId="EBI-1394295">
        <id>Q13277</id>
        <label>STX3</label>
    </interactant>
    <organismsDiffer>false</organismsDiffer>
    <experiments>3</experiments>
</comment>
<comment type="interaction">
    <interactant intactId="EBI-1050125">
        <id>O15173</id>
    </interactant>
    <interactant intactId="EBI-12847034">
        <id>P59542</id>
        <label>TAS2R19</label>
    </interactant>
    <organismsDiffer>false</organismsDiffer>
    <experiments>3</experiments>
</comment>
<comment type="interaction">
    <interactant intactId="EBI-1050125">
        <id>O15173</id>
    </interactant>
    <interactant intactId="EBI-2877718">
        <id>Q9NZ01</id>
        <label>TECR</label>
    </interactant>
    <organismsDiffer>false</organismsDiffer>
    <experiments>3</experiments>
</comment>
<comment type="interaction">
    <interactant intactId="EBI-1050125">
        <id>O15173</id>
    </interactant>
    <interactant intactId="EBI-714319">
        <id>P02787</id>
        <label>TF</label>
    </interactant>
    <organismsDiffer>false</organismsDiffer>
    <experiments>3</experiments>
</comment>
<comment type="interaction">
    <interactant intactId="EBI-1050125">
        <id>O15173</id>
    </interactant>
    <interactant intactId="EBI-12845616">
        <id>Q6UX40</id>
        <label>TMEM107</label>
    </interactant>
    <organismsDiffer>false</organismsDiffer>
    <experiments>3</experiments>
</comment>
<comment type="interaction">
    <interactant intactId="EBI-1050125">
        <id>O15173</id>
    </interactant>
    <interactant intactId="EBI-13046724">
        <id>Q14656</id>
        <label>TMEM187</label>
    </interactant>
    <organismsDiffer>false</organismsDiffer>
    <experiments>3</experiments>
</comment>
<comment type="interaction">
    <interactant intactId="EBI-1050125">
        <id>O15173</id>
    </interactant>
    <interactant intactId="EBI-741829">
        <id>Q96HH6</id>
        <label>TMEM19</label>
    </interactant>
    <organismsDiffer>false</organismsDiffer>
    <experiments>3</experiments>
</comment>
<comment type="interaction">
    <interactant intactId="EBI-1050125">
        <id>O15173</id>
    </interactant>
    <interactant intactId="EBI-12876824">
        <id>Q9BTX3</id>
        <label>TMEM208</label>
    </interactant>
    <organismsDiffer>false</organismsDiffer>
    <experiments>3</experiments>
</comment>
<comment type="interaction">
    <interactant intactId="EBI-1050125">
        <id>O15173</id>
    </interactant>
    <interactant intactId="EBI-2852148">
        <id>Q9H2L4</id>
        <label>TMEM60</label>
    </interactant>
    <organismsDiffer>false</organismsDiffer>
    <experiments>3</experiments>
</comment>
<comment type="interaction">
    <interactant intactId="EBI-1050125">
        <id>O15173</id>
    </interactant>
    <interactant intactId="EBI-12015604">
        <id>Q8N2M4</id>
        <label>TMEM86A</label>
    </interactant>
    <organismsDiffer>false</organismsDiffer>
    <experiments>3</experiments>
</comment>
<comment type="interaction">
    <interactant intactId="EBI-1050125">
        <id>O15173</id>
    </interactant>
    <interactant intactId="EBI-2548832">
        <id>Q8N661</id>
        <label>TMEM86B</label>
    </interactant>
    <organismsDiffer>false</organismsDiffer>
    <experiments>3</experiments>
</comment>
<comment type="interaction">
    <interactant intactId="EBI-1050125">
        <id>O15173</id>
    </interactant>
    <interactant intactId="EBI-3914288">
        <id>O60636</id>
        <label>TSPAN2</label>
    </interactant>
    <organismsDiffer>false</organismsDiffer>
    <experiments>3</experiments>
</comment>
<comment type="interaction">
    <interactant intactId="EBI-1050125">
        <id>O15173</id>
    </interactant>
    <interactant intactId="EBI-1993850">
        <id>O00124</id>
        <label>UBXN8</label>
    </interactant>
    <organismsDiffer>false</organismsDiffer>
    <experiments>3</experiments>
</comment>
<comment type="interaction">
    <interactant intactId="EBI-1050125">
        <id>O15173</id>
    </interactant>
    <interactant intactId="EBI-1059156">
        <id>Q9P0L0</id>
        <label>VAPA</label>
    </interactant>
    <organismsDiffer>false</organismsDiffer>
    <experiments>5</experiments>
</comment>
<comment type="interaction">
    <interactant intactId="EBI-1050125">
        <id>O15173</id>
    </interactant>
    <interactant intactId="EBI-751204">
        <id>Q9BWQ6</id>
        <label>YIPF2</label>
    </interactant>
    <organismsDiffer>false</organismsDiffer>
    <experiments>3</experiments>
</comment>
<comment type="interaction">
    <interactant intactId="EBI-1050125">
        <id>O15173</id>
    </interactant>
    <interactant intactId="EBI-2849773">
        <id>Q8IVQ6</id>
        <label>ZDHHC21</label>
    </interactant>
    <organismsDiffer>false</organismsDiffer>
    <experiments>3</experiments>
</comment>
<comment type="interaction">
    <interactant intactId="EBI-1050125">
        <id>O15173</id>
    </interactant>
    <interactant intactId="EBI-718439">
        <id>O95159</id>
        <label>ZFPL1</label>
    </interactant>
    <organismsDiffer>false</organismsDiffer>
    <experiments>3</experiments>
</comment>
<comment type="interaction">
    <interactant intactId="EBI-1050125">
        <id>O15173</id>
    </interactant>
    <interactant intactId="EBI-7174007">
        <id>P22315</id>
        <label>Fech</label>
    </interactant>
    <organismsDiffer>true</organismsDiffer>
    <experiments>2</experiments>
</comment>
<comment type="subcellular location">
    <subcellularLocation>
        <location evidence="13">Membrane</location>
        <topology evidence="12">Single-pass membrane protein</topology>
    </subcellularLocation>
    <subcellularLocation>
        <location evidence="6 7">Nucleus envelope</location>
    </subcellularLocation>
    <subcellularLocation>
        <location evidence="6">Endoplasmic reticulum</location>
    </subcellularLocation>
    <subcellularLocation>
        <location evidence="8">Secreted</location>
    </subcellularLocation>
</comment>
<comment type="alternative products">
    <event type="alternative splicing"/>
    <isoform>
        <id>O15173-1</id>
        <name>1</name>
        <sequence type="displayed"/>
    </isoform>
    <isoform>
        <id>O15173-2</id>
        <name>2</name>
        <sequence type="described" ref="VSP_053500"/>
    </isoform>
</comment>
<comment type="tissue specificity">
    <text evidence="5 8">Expressed by endometrial glands and stroma (at protein level) (PubMed:23793472). Detected in urine (at protein level) (PubMed:37453717).</text>
</comment>
<comment type="domain">
    <text evidence="1">The cytochrome b5 heme-binding domain lacks the conserved iron-binding His residues at positions 137 and 161.</text>
</comment>
<comment type="miscellaneous">
    <text evidence="10">Non-classical progesterone receptors involved in extranuclear signaling are classified in 2 groups: the class II progestin and adipoQ receptor (PAQR) family (also called mPRs) (PAQR5, PAQR6, PAQR7, PAQR8 and PAQR9) and the b5-like heme/steroid-binding protein family (also called MAPRs) (PGRMC1, PGRMC2, NENF and CYB5D2).</text>
</comment>
<comment type="similarity">
    <text evidence="12">Belongs to the cytochrome b5 family. MAPR subfamily.</text>
</comment>
<proteinExistence type="evidence at protein level"/>
<keyword id="KW-0025">Alternative splicing</keyword>
<keyword id="KW-0256">Endoplasmic reticulum</keyword>
<keyword id="KW-0325">Glycoprotein</keyword>
<keyword id="KW-0446">Lipid-binding</keyword>
<keyword id="KW-0472">Membrane</keyword>
<keyword id="KW-0539">Nucleus</keyword>
<keyword id="KW-0597">Phosphoprotein</keyword>
<keyword id="KW-0654">Proteoglycan</keyword>
<keyword id="KW-1267">Proteomics identification</keyword>
<keyword id="KW-0675">Receptor</keyword>
<keyword id="KW-1185">Reference proteome</keyword>
<keyword id="KW-0964">Secreted</keyword>
<keyword id="KW-0754">Steroid-binding</keyword>
<keyword id="KW-0812">Transmembrane</keyword>
<keyword id="KW-1133">Transmembrane helix</keyword>
<gene>
    <name evidence="15" type="primary">PGRMC2</name>
    <name evidence="11" type="synonym">DG6</name>
    <name type="synonym">PMBP</name>
</gene>
<evidence type="ECO:0000250" key="1"/>
<evidence type="ECO:0000250" key="2">
    <source>
        <dbReference type="UniProtKB" id="Q80UU9"/>
    </source>
</evidence>
<evidence type="ECO:0000255" key="3"/>
<evidence type="ECO:0000256" key="4">
    <source>
        <dbReference type="SAM" id="MobiDB-lite"/>
    </source>
</evidence>
<evidence type="ECO:0000269" key="5">
    <source>
    </source>
</evidence>
<evidence type="ECO:0000269" key="6">
    <source>
    </source>
</evidence>
<evidence type="ECO:0000269" key="7">
    <source>
    </source>
</evidence>
<evidence type="ECO:0000269" key="8">
    <source>
    </source>
</evidence>
<evidence type="ECO:0000303" key="9">
    <source>
    </source>
</evidence>
<evidence type="ECO:0000303" key="10">
    <source>
    </source>
</evidence>
<evidence type="ECO:0000303" key="11">
    <source>
    </source>
</evidence>
<evidence type="ECO:0000305" key="12"/>
<evidence type="ECO:0000305" key="13">
    <source>
    </source>
</evidence>
<evidence type="ECO:0000305" key="14">
    <source>
    </source>
</evidence>
<evidence type="ECO:0000312" key="15">
    <source>
        <dbReference type="HGNC" id="HGNC:16089"/>
    </source>
</evidence>
<evidence type="ECO:0007744" key="16">
    <source>
    </source>
</evidence>
<evidence type="ECO:0007744" key="17">
    <source>
    </source>
</evidence>
<evidence type="ECO:0007744" key="18">
    <source>
    </source>
</evidence>
<evidence type="ECO:0007744" key="19">
    <source>
    </source>
</evidence>
<evidence type="ECO:0007744" key="20">
    <source>
    </source>
</evidence>
<evidence type="ECO:0007744" key="21">
    <source>
    </source>
</evidence>
<evidence type="ECO:0007744" key="22">
    <source>
    </source>
</evidence>
<evidence type="ECO:0007744" key="23">
    <source>
    </source>
</evidence>
<evidence type="ECO:0007744" key="24">
    <source>
    </source>
</evidence>
<protein>
    <recommendedName>
        <fullName evidence="12">Membrane-associated progesterone receptor component 2</fullName>
    </recommendedName>
    <alternativeName>
        <fullName>Progesterone membrane-binding protein</fullName>
    </alternativeName>
    <alternativeName>
        <fullName>Steroid receptor protein DG6</fullName>
    </alternativeName>
</protein>